<reference key="1">
    <citation type="submission" date="2006-12" db="EMBL/GenBank/DDBJ databases">
        <authorList>
            <person name="Hendrix L."/>
            <person name="Mohamoud Y."/>
            <person name="Radune D."/>
            <person name="Shvartsbeyn A."/>
            <person name="Daugherty S."/>
            <person name="Dodson R."/>
            <person name="Durkin A.S."/>
            <person name="Harkins D."/>
            <person name="Huot H."/>
            <person name="Kothari S.P."/>
            <person name="Madupu R."/>
            <person name="Li J."/>
            <person name="Nelson W.C."/>
            <person name="Shrivastava S."/>
            <person name="Giglio M.G."/>
            <person name="Haft D."/>
            <person name="Selengut J."/>
            <person name="Fraser-Ligget C."/>
            <person name="Seshadri R."/>
        </authorList>
    </citation>
    <scope>NUCLEOTIDE SEQUENCE [LARGE SCALE GENOMIC DNA]</scope>
    <source>
        <strain>ATCC 35685 / KC583 / Herrer 020/F12,63</strain>
    </source>
</reference>
<keyword id="KW-0963">Cytoplasm</keyword>
<keyword id="KW-0444">Lipid biosynthesis</keyword>
<keyword id="KW-0443">Lipid metabolism</keyword>
<keyword id="KW-0594">Phospholipid biosynthesis</keyword>
<keyword id="KW-1208">Phospholipid metabolism</keyword>
<keyword id="KW-0808">Transferase</keyword>
<accession>A1USI8</accession>
<protein>
    <recommendedName>
        <fullName evidence="1">Phosphate acyltransferase</fullName>
        <ecNumber evidence="1">2.3.1.274</ecNumber>
    </recommendedName>
    <alternativeName>
        <fullName evidence="1">Acyl-ACP phosphotransacylase</fullName>
    </alternativeName>
    <alternativeName>
        <fullName evidence="1">Acyl-[acyl-carrier-protein]--phosphate acyltransferase</fullName>
    </alternativeName>
    <alternativeName>
        <fullName evidence="1">Phosphate-acyl-ACP acyltransferase</fullName>
    </alternativeName>
</protein>
<feature type="chain" id="PRO_1000001720" description="Phosphate acyltransferase">
    <location>
        <begin position="1"/>
        <end position="356"/>
    </location>
</feature>
<gene>
    <name evidence="1" type="primary">plsX</name>
    <name type="ordered locus">BARBAKC583_0637</name>
</gene>
<dbReference type="EC" id="2.3.1.274" evidence="1"/>
<dbReference type="EMBL" id="CP000524">
    <property type="protein sequence ID" value="ABM45050.1"/>
    <property type="molecule type" value="Genomic_DNA"/>
</dbReference>
<dbReference type="RefSeq" id="WP_005766849.1">
    <property type="nucleotide sequence ID" value="NC_008783.1"/>
</dbReference>
<dbReference type="SMR" id="A1USI8"/>
<dbReference type="STRING" id="360095.BARBAKC583_0637"/>
<dbReference type="GeneID" id="4683911"/>
<dbReference type="KEGG" id="bbk:BARBAKC583_0637"/>
<dbReference type="PATRIC" id="fig|360095.6.peg.621"/>
<dbReference type="eggNOG" id="COG0416">
    <property type="taxonomic scope" value="Bacteria"/>
</dbReference>
<dbReference type="HOGENOM" id="CLU_039379_1_0_5"/>
<dbReference type="OrthoDB" id="9806408at2"/>
<dbReference type="UniPathway" id="UPA00085"/>
<dbReference type="Proteomes" id="UP000000643">
    <property type="component" value="Chromosome"/>
</dbReference>
<dbReference type="GO" id="GO:0005737">
    <property type="term" value="C:cytoplasm"/>
    <property type="evidence" value="ECO:0007669"/>
    <property type="project" value="UniProtKB-SubCell"/>
</dbReference>
<dbReference type="GO" id="GO:0043811">
    <property type="term" value="F:phosphate:acyl-[acyl carrier protein] acyltransferase activity"/>
    <property type="evidence" value="ECO:0007669"/>
    <property type="project" value="UniProtKB-UniRule"/>
</dbReference>
<dbReference type="GO" id="GO:0006633">
    <property type="term" value="P:fatty acid biosynthetic process"/>
    <property type="evidence" value="ECO:0007669"/>
    <property type="project" value="UniProtKB-UniRule"/>
</dbReference>
<dbReference type="GO" id="GO:0008654">
    <property type="term" value="P:phospholipid biosynthetic process"/>
    <property type="evidence" value="ECO:0007669"/>
    <property type="project" value="UniProtKB-KW"/>
</dbReference>
<dbReference type="Gene3D" id="3.40.718.10">
    <property type="entry name" value="Isopropylmalate Dehydrogenase"/>
    <property type="match status" value="1"/>
</dbReference>
<dbReference type="HAMAP" id="MF_00019">
    <property type="entry name" value="PlsX"/>
    <property type="match status" value="1"/>
</dbReference>
<dbReference type="InterPro" id="IPR003664">
    <property type="entry name" value="FA_synthesis"/>
</dbReference>
<dbReference type="InterPro" id="IPR012281">
    <property type="entry name" value="Phospholipid_synth_PlsX-like"/>
</dbReference>
<dbReference type="NCBIfam" id="TIGR00182">
    <property type="entry name" value="plsX"/>
    <property type="match status" value="1"/>
</dbReference>
<dbReference type="PANTHER" id="PTHR30100">
    <property type="entry name" value="FATTY ACID/PHOSPHOLIPID SYNTHESIS PROTEIN PLSX"/>
    <property type="match status" value="1"/>
</dbReference>
<dbReference type="PANTHER" id="PTHR30100:SF1">
    <property type="entry name" value="PHOSPHATE ACYLTRANSFERASE"/>
    <property type="match status" value="1"/>
</dbReference>
<dbReference type="Pfam" id="PF02504">
    <property type="entry name" value="FA_synthesis"/>
    <property type="match status" value="1"/>
</dbReference>
<dbReference type="PIRSF" id="PIRSF002465">
    <property type="entry name" value="Phsphlp_syn_PlsX"/>
    <property type="match status" value="1"/>
</dbReference>
<dbReference type="SUPFAM" id="SSF53659">
    <property type="entry name" value="Isocitrate/Isopropylmalate dehydrogenase-like"/>
    <property type="match status" value="1"/>
</dbReference>
<name>PLSX_BARBK</name>
<comment type="function">
    <text evidence="1">Catalyzes the reversible formation of acyl-phosphate (acyl-PO(4)) from acyl-[acyl-carrier-protein] (acyl-ACP). This enzyme utilizes acyl-ACP as fatty acyl donor, but not acyl-CoA.</text>
</comment>
<comment type="catalytic activity">
    <reaction evidence="1">
        <text>a fatty acyl-[ACP] + phosphate = an acyl phosphate + holo-[ACP]</text>
        <dbReference type="Rhea" id="RHEA:42292"/>
        <dbReference type="Rhea" id="RHEA-COMP:9685"/>
        <dbReference type="Rhea" id="RHEA-COMP:14125"/>
        <dbReference type="ChEBI" id="CHEBI:43474"/>
        <dbReference type="ChEBI" id="CHEBI:59918"/>
        <dbReference type="ChEBI" id="CHEBI:64479"/>
        <dbReference type="ChEBI" id="CHEBI:138651"/>
        <dbReference type="EC" id="2.3.1.274"/>
    </reaction>
</comment>
<comment type="pathway">
    <text evidence="1">Lipid metabolism; phospholipid metabolism.</text>
</comment>
<comment type="subunit">
    <text evidence="1">Homodimer. Probably interacts with PlsY.</text>
</comment>
<comment type="subcellular location">
    <subcellularLocation>
        <location evidence="1">Cytoplasm</location>
    </subcellularLocation>
    <text evidence="1">Associated with the membrane possibly through PlsY.</text>
</comment>
<comment type="similarity">
    <text evidence="1">Belongs to the PlsX family.</text>
</comment>
<evidence type="ECO:0000255" key="1">
    <source>
        <dbReference type="HAMAP-Rule" id="MF_00019"/>
    </source>
</evidence>
<organism>
    <name type="scientific">Bartonella bacilliformis (strain ATCC 35685 / KC583 / Herrer 020/F12,63)</name>
    <dbReference type="NCBI Taxonomy" id="360095"/>
    <lineage>
        <taxon>Bacteria</taxon>
        <taxon>Pseudomonadati</taxon>
        <taxon>Pseudomonadota</taxon>
        <taxon>Alphaproteobacteria</taxon>
        <taxon>Hyphomicrobiales</taxon>
        <taxon>Bartonellaceae</taxon>
        <taxon>Bartonella</taxon>
    </lineage>
</organism>
<proteinExistence type="inferred from homology"/>
<sequence length="356" mass="38591">MIRISVDVMGGDYGPEVTIAGAAIAQKHLPKVHFLFYGIDEAVEPVLKKYPDLLSVSHFYATESYTRMDEKPSQALRVGRGKSSMWHAIEAVKNGEADSCVSAGNTGALMAMSYFCLKMIAETERPGIAGIWPTLRNDSIVLDIGATIGASANQLVDFAVMGASMFRSLYNVEKTTIGLLNVGVEEVKGLDEIKKAGIILSKVQFEGLEYKGFIEGNDIGKGMVDVVVTEGFSGNIALKVAEGTAQQISELLKSAMRSSIFSRFGYLLSQSAFRKLKQKIDLDRVNGGVLLGLNGIVVKSHGSASASDFSSAIRIGYEMVNNELLKKIITDLQCFHEKKAIFLNNKGESVIDKETI</sequence>